<organism>
    <name type="scientific">Hydrogenovibrio crunogenus (strain DSM 25203 / XCL-2)</name>
    <name type="common">Thiomicrospira crunogena</name>
    <dbReference type="NCBI Taxonomy" id="317025"/>
    <lineage>
        <taxon>Bacteria</taxon>
        <taxon>Pseudomonadati</taxon>
        <taxon>Pseudomonadota</taxon>
        <taxon>Gammaproteobacteria</taxon>
        <taxon>Thiotrichales</taxon>
        <taxon>Piscirickettsiaceae</taxon>
        <taxon>Hydrogenovibrio</taxon>
    </lineage>
</organism>
<name>FMT_HYDCU</name>
<sequence>MTQPLRIIFAGTPDFSVPPLKTLIDSEHEVVAVYTQPDRPAGRGRKLTASPVKQTALEHDIPVYQPVSLKTPEAQAELEALQADVMIVVAYGLILPKAVLDMPKYGCLNIHASILPRWRGAAPIQRAIQMGDAETGVTIMQMDVGLDTGDMLTILKTPIKPEDTAQTLHDRLSALGCDAMMTTLSNLQTDQLSPVKQDERQVTYAEKLNKAEAELDWQASAQTLARQVQAFNPWPVAFTQYQGQPLRIWQAEVGHASTQKSPGLVISVSKTGMEVATGKGSLLIKQVQPSGKKAMPAYDFAQARQLTGQTLG</sequence>
<proteinExistence type="inferred from homology"/>
<keyword id="KW-0648">Protein biosynthesis</keyword>
<keyword id="KW-0808">Transferase</keyword>
<feature type="chain" id="PRO_1000203878" description="Methionyl-tRNA formyltransferase">
    <location>
        <begin position="1"/>
        <end position="312"/>
    </location>
</feature>
<feature type="binding site" evidence="1">
    <location>
        <begin position="113"/>
        <end position="116"/>
    </location>
    <ligand>
        <name>(6S)-5,6,7,8-tetrahydrofolate</name>
        <dbReference type="ChEBI" id="CHEBI:57453"/>
    </ligand>
</feature>
<evidence type="ECO:0000255" key="1">
    <source>
        <dbReference type="HAMAP-Rule" id="MF_00182"/>
    </source>
</evidence>
<reference key="1">
    <citation type="journal article" date="2006" name="PLoS Biol.">
        <title>The genome of deep-sea vent chemolithoautotroph Thiomicrospira crunogena XCL-2.</title>
        <authorList>
            <person name="Scott K.M."/>
            <person name="Sievert S.M."/>
            <person name="Abril F.N."/>
            <person name="Ball L.A."/>
            <person name="Barrett C.J."/>
            <person name="Blake R.A."/>
            <person name="Boller A.J."/>
            <person name="Chain P.S.G."/>
            <person name="Clark J.A."/>
            <person name="Davis C.R."/>
            <person name="Detter C."/>
            <person name="Do K.F."/>
            <person name="Dobrinski K.P."/>
            <person name="Faza B.I."/>
            <person name="Fitzpatrick K.A."/>
            <person name="Freyermuth S.K."/>
            <person name="Harmer T.L."/>
            <person name="Hauser L.J."/>
            <person name="Huegler M."/>
            <person name="Kerfeld C.A."/>
            <person name="Klotz M.G."/>
            <person name="Kong W.W."/>
            <person name="Land M."/>
            <person name="Lapidus A."/>
            <person name="Larimer F.W."/>
            <person name="Longo D.L."/>
            <person name="Lucas S."/>
            <person name="Malfatti S.A."/>
            <person name="Massey S.E."/>
            <person name="Martin D.D."/>
            <person name="McCuddin Z."/>
            <person name="Meyer F."/>
            <person name="Moore J.L."/>
            <person name="Ocampo L.H. Jr."/>
            <person name="Paul J.H."/>
            <person name="Paulsen I.T."/>
            <person name="Reep D.K."/>
            <person name="Ren Q."/>
            <person name="Ross R.L."/>
            <person name="Sato P.Y."/>
            <person name="Thomas P."/>
            <person name="Tinkham L.E."/>
            <person name="Zeruth G.T."/>
        </authorList>
    </citation>
    <scope>NUCLEOTIDE SEQUENCE [LARGE SCALE GENOMIC DNA]</scope>
    <source>
        <strain>DSM 25203 / XCL-2</strain>
    </source>
</reference>
<protein>
    <recommendedName>
        <fullName evidence="1">Methionyl-tRNA formyltransferase</fullName>
        <ecNumber evidence="1">2.1.2.9</ecNumber>
    </recommendedName>
</protein>
<accession>Q31J85</accession>
<dbReference type="EC" id="2.1.2.9" evidence="1"/>
<dbReference type="EMBL" id="CP000109">
    <property type="protein sequence ID" value="ABB40788.1"/>
    <property type="molecule type" value="Genomic_DNA"/>
</dbReference>
<dbReference type="SMR" id="Q31J85"/>
<dbReference type="STRING" id="317025.Tcr_0192"/>
<dbReference type="KEGG" id="tcx:Tcr_0192"/>
<dbReference type="eggNOG" id="COG0223">
    <property type="taxonomic scope" value="Bacteria"/>
</dbReference>
<dbReference type="HOGENOM" id="CLU_033347_1_2_6"/>
<dbReference type="OrthoDB" id="9802815at2"/>
<dbReference type="GO" id="GO:0005829">
    <property type="term" value="C:cytosol"/>
    <property type="evidence" value="ECO:0007669"/>
    <property type="project" value="TreeGrafter"/>
</dbReference>
<dbReference type="GO" id="GO:0004479">
    <property type="term" value="F:methionyl-tRNA formyltransferase activity"/>
    <property type="evidence" value="ECO:0007669"/>
    <property type="project" value="UniProtKB-UniRule"/>
</dbReference>
<dbReference type="CDD" id="cd08646">
    <property type="entry name" value="FMT_core_Met-tRNA-FMT_N"/>
    <property type="match status" value="1"/>
</dbReference>
<dbReference type="CDD" id="cd08704">
    <property type="entry name" value="Met_tRNA_FMT_C"/>
    <property type="match status" value="1"/>
</dbReference>
<dbReference type="FunFam" id="3.40.50.170:FF:000003">
    <property type="entry name" value="Methionyl-tRNA formyltransferase"/>
    <property type="match status" value="1"/>
</dbReference>
<dbReference type="Gene3D" id="3.10.25.10">
    <property type="entry name" value="Formyl transferase, C-terminal domain"/>
    <property type="match status" value="1"/>
</dbReference>
<dbReference type="Gene3D" id="3.40.50.170">
    <property type="entry name" value="Formyl transferase, N-terminal domain"/>
    <property type="match status" value="1"/>
</dbReference>
<dbReference type="HAMAP" id="MF_00182">
    <property type="entry name" value="Formyl_trans"/>
    <property type="match status" value="1"/>
</dbReference>
<dbReference type="InterPro" id="IPR005794">
    <property type="entry name" value="Fmt"/>
</dbReference>
<dbReference type="InterPro" id="IPR005793">
    <property type="entry name" value="Formyl_trans_C"/>
</dbReference>
<dbReference type="InterPro" id="IPR037022">
    <property type="entry name" value="Formyl_trans_C_sf"/>
</dbReference>
<dbReference type="InterPro" id="IPR002376">
    <property type="entry name" value="Formyl_transf_N"/>
</dbReference>
<dbReference type="InterPro" id="IPR036477">
    <property type="entry name" value="Formyl_transf_N_sf"/>
</dbReference>
<dbReference type="InterPro" id="IPR011034">
    <property type="entry name" value="Formyl_transferase-like_C_sf"/>
</dbReference>
<dbReference type="InterPro" id="IPR001555">
    <property type="entry name" value="GART_AS"/>
</dbReference>
<dbReference type="InterPro" id="IPR044135">
    <property type="entry name" value="Met-tRNA-FMT_C"/>
</dbReference>
<dbReference type="InterPro" id="IPR041711">
    <property type="entry name" value="Met-tRNA-FMT_N"/>
</dbReference>
<dbReference type="NCBIfam" id="TIGR00460">
    <property type="entry name" value="fmt"/>
    <property type="match status" value="1"/>
</dbReference>
<dbReference type="PANTHER" id="PTHR11138">
    <property type="entry name" value="METHIONYL-TRNA FORMYLTRANSFERASE"/>
    <property type="match status" value="1"/>
</dbReference>
<dbReference type="PANTHER" id="PTHR11138:SF5">
    <property type="entry name" value="METHIONYL-TRNA FORMYLTRANSFERASE, MITOCHONDRIAL"/>
    <property type="match status" value="1"/>
</dbReference>
<dbReference type="Pfam" id="PF02911">
    <property type="entry name" value="Formyl_trans_C"/>
    <property type="match status" value="1"/>
</dbReference>
<dbReference type="Pfam" id="PF00551">
    <property type="entry name" value="Formyl_trans_N"/>
    <property type="match status" value="1"/>
</dbReference>
<dbReference type="SUPFAM" id="SSF50486">
    <property type="entry name" value="FMT C-terminal domain-like"/>
    <property type="match status" value="1"/>
</dbReference>
<dbReference type="SUPFAM" id="SSF53328">
    <property type="entry name" value="Formyltransferase"/>
    <property type="match status" value="1"/>
</dbReference>
<dbReference type="PROSITE" id="PS00373">
    <property type="entry name" value="GART"/>
    <property type="match status" value="1"/>
</dbReference>
<comment type="function">
    <text evidence="1">Attaches a formyl group to the free amino group of methionyl-tRNA(fMet). The formyl group appears to play a dual role in the initiator identity of N-formylmethionyl-tRNA by promoting its recognition by IF2 and preventing the misappropriation of this tRNA by the elongation apparatus.</text>
</comment>
<comment type="catalytic activity">
    <reaction evidence="1">
        <text>L-methionyl-tRNA(fMet) + (6R)-10-formyltetrahydrofolate = N-formyl-L-methionyl-tRNA(fMet) + (6S)-5,6,7,8-tetrahydrofolate + H(+)</text>
        <dbReference type="Rhea" id="RHEA:24380"/>
        <dbReference type="Rhea" id="RHEA-COMP:9952"/>
        <dbReference type="Rhea" id="RHEA-COMP:9953"/>
        <dbReference type="ChEBI" id="CHEBI:15378"/>
        <dbReference type="ChEBI" id="CHEBI:57453"/>
        <dbReference type="ChEBI" id="CHEBI:78530"/>
        <dbReference type="ChEBI" id="CHEBI:78844"/>
        <dbReference type="ChEBI" id="CHEBI:195366"/>
        <dbReference type="EC" id="2.1.2.9"/>
    </reaction>
</comment>
<comment type="similarity">
    <text evidence="1">Belongs to the Fmt family.</text>
</comment>
<gene>
    <name evidence="1" type="primary">fmt</name>
    <name type="ordered locus">Tcr_0192</name>
</gene>